<proteinExistence type="evidence at protein level"/>
<keyword id="KW-0009">Actin-binding</keyword>
<keyword id="KW-0112">Calmodulin-binding</keyword>
<keyword id="KW-1003">Cell membrane</keyword>
<keyword id="KW-0963">Cytoplasm</keyword>
<keyword id="KW-0206">Cytoskeleton</keyword>
<keyword id="KW-0449">Lipoprotein</keyword>
<keyword id="KW-0472">Membrane</keyword>
<keyword id="KW-0519">Myristate</keyword>
<keyword id="KW-0597">Phosphoprotein</keyword>
<keyword id="KW-1185">Reference proteome</keyword>
<gene>
    <name type="primary">Marcksl1</name>
    <name type="synonym">Mlp</name>
    <name type="synonym">Mrp</name>
</gene>
<reference key="1">
    <citation type="journal article" date="1991" name="FEBS Lett.">
        <title>A mouse brain cDNA encodes a novel protein with the protein kinase C phosphorylation site domain common to MARCKS.</title>
        <authorList>
            <person name="Umekage T."/>
            <person name="Kato K."/>
        </authorList>
    </citation>
    <scope>NUCLEOTIDE SEQUENCE [MRNA]</scope>
    <scope>TISSUE SPECIFICITY</scope>
    <source>
        <strain>BALB/cJ</strain>
        <tissue>Brain</tissue>
    </source>
</reference>
<reference key="2">
    <citation type="journal article" date="1992" name="Cell">
        <title>MacMARCKS, a novel member of the MARCKS family of protein kinase C substrates.</title>
        <authorList>
            <person name="Li J."/>
            <person name="Aderem A."/>
        </authorList>
    </citation>
    <scope>NUCLEOTIDE SEQUENCE [MRNA]</scope>
    <scope>INDUCTION</scope>
</reference>
<reference key="3">
    <citation type="journal article" date="1993" name="Genomics">
        <title>Nucleotide sequence, expression, and chromosomal mapping of Mrp and mapping of five related sequences.</title>
        <authorList>
            <person name="Lobach D.F."/>
            <person name="Rochelle J.M."/>
            <person name="Watson M.L."/>
            <person name="Seldin M.F."/>
            <person name="Blackshear P.J."/>
        </authorList>
    </citation>
    <scope>NUCLEOTIDE SEQUENCE [GENOMIC DNA]</scope>
    <scope>TISSUE SPECIFICITY</scope>
</reference>
<reference key="4">
    <citation type="journal article" date="2005" name="Science">
        <title>The transcriptional landscape of the mammalian genome.</title>
        <authorList>
            <person name="Carninci P."/>
            <person name="Kasukawa T."/>
            <person name="Katayama S."/>
            <person name="Gough J."/>
            <person name="Frith M.C."/>
            <person name="Maeda N."/>
            <person name="Oyama R."/>
            <person name="Ravasi T."/>
            <person name="Lenhard B."/>
            <person name="Wells C."/>
            <person name="Kodzius R."/>
            <person name="Shimokawa K."/>
            <person name="Bajic V.B."/>
            <person name="Brenner S.E."/>
            <person name="Batalov S."/>
            <person name="Forrest A.R."/>
            <person name="Zavolan M."/>
            <person name="Davis M.J."/>
            <person name="Wilming L.G."/>
            <person name="Aidinis V."/>
            <person name="Allen J.E."/>
            <person name="Ambesi-Impiombato A."/>
            <person name="Apweiler R."/>
            <person name="Aturaliya R.N."/>
            <person name="Bailey T.L."/>
            <person name="Bansal M."/>
            <person name="Baxter L."/>
            <person name="Beisel K.W."/>
            <person name="Bersano T."/>
            <person name="Bono H."/>
            <person name="Chalk A.M."/>
            <person name="Chiu K.P."/>
            <person name="Choudhary V."/>
            <person name="Christoffels A."/>
            <person name="Clutterbuck D.R."/>
            <person name="Crowe M.L."/>
            <person name="Dalla E."/>
            <person name="Dalrymple B.P."/>
            <person name="de Bono B."/>
            <person name="Della Gatta G."/>
            <person name="di Bernardo D."/>
            <person name="Down T."/>
            <person name="Engstrom P."/>
            <person name="Fagiolini M."/>
            <person name="Faulkner G."/>
            <person name="Fletcher C.F."/>
            <person name="Fukushima T."/>
            <person name="Furuno M."/>
            <person name="Futaki S."/>
            <person name="Gariboldi M."/>
            <person name="Georgii-Hemming P."/>
            <person name="Gingeras T.R."/>
            <person name="Gojobori T."/>
            <person name="Green R.E."/>
            <person name="Gustincich S."/>
            <person name="Harbers M."/>
            <person name="Hayashi Y."/>
            <person name="Hensch T.K."/>
            <person name="Hirokawa N."/>
            <person name="Hill D."/>
            <person name="Huminiecki L."/>
            <person name="Iacono M."/>
            <person name="Ikeo K."/>
            <person name="Iwama A."/>
            <person name="Ishikawa T."/>
            <person name="Jakt M."/>
            <person name="Kanapin A."/>
            <person name="Katoh M."/>
            <person name="Kawasawa Y."/>
            <person name="Kelso J."/>
            <person name="Kitamura H."/>
            <person name="Kitano H."/>
            <person name="Kollias G."/>
            <person name="Krishnan S.P."/>
            <person name="Kruger A."/>
            <person name="Kummerfeld S.K."/>
            <person name="Kurochkin I.V."/>
            <person name="Lareau L.F."/>
            <person name="Lazarevic D."/>
            <person name="Lipovich L."/>
            <person name="Liu J."/>
            <person name="Liuni S."/>
            <person name="McWilliam S."/>
            <person name="Madan Babu M."/>
            <person name="Madera M."/>
            <person name="Marchionni L."/>
            <person name="Matsuda H."/>
            <person name="Matsuzawa S."/>
            <person name="Miki H."/>
            <person name="Mignone F."/>
            <person name="Miyake S."/>
            <person name="Morris K."/>
            <person name="Mottagui-Tabar S."/>
            <person name="Mulder N."/>
            <person name="Nakano N."/>
            <person name="Nakauchi H."/>
            <person name="Ng P."/>
            <person name="Nilsson R."/>
            <person name="Nishiguchi S."/>
            <person name="Nishikawa S."/>
            <person name="Nori F."/>
            <person name="Ohara O."/>
            <person name="Okazaki Y."/>
            <person name="Orlando V."/>
            <person name="Pang K.C."/>
            <person name="Pavan W.J."/>
            <person name="Pavesi G."/>
            <person name="Pesole G."/>
            <person name="Petrovsky N."/>
            <person name="Piazza S."/>
            <person name="Reed J."/>
            <person name="Reid J.F."/>
            <person name="Ring B.Z."/>
            <person name="Ringwald M."/>
            <person name="Rost B."/>
            <person name="Ruan Y."/>
            <person name="Salzberg S.L."/>
            <person name="Sandelin A."/>
            <person name="Schneider C."/>
            <person name="Schoenbach C."/>
            <person name="Sekiguchi K."/>
            <person name="Semple C.A."/>
            <person name="Seno S."/>
            <person name="Sessa L."/>
            <person name="Sheng Y."/>
            <person name="Shibata Y."/>
            <person name="Shimada H."/>
            <person name="Shimada K."/>
            <person name="Silva D."/>
            <person name="Sinclair B."/>
            <person name="Sperling S."/>
            <person name="Stupka E."/>
            <person name="Sugiura K."/>
            <person name="Sultana R."/>
            <person name="Takenaka Y."/>
            <person name="Taki K."/>
            <person name="Tammoja K."/>
            <person name="Tan S.L."/>
            <person name="Tang S."/>
            <person name="Taylor M.S."/>
            <person name="Tegner J."/>
            <person name="Teichmann S.A."/>
            <person name="Ueda H.R."/>
            <person name="van Nimwegen E."/>
            <person name="Verardo R."/>
            <person name="Wei C.L."/>
            <person name="Yagi K."/>
            <person name="Yamanishi H."/>
            <person name="Zabarovsky E."/>
            <person name="Zhu S."/>
            <person name="Zimmer A."/>
            <person name="Hide W."/>
            <person name="Bult C."/>
            <person name="Grimmond S.M."/>
            <person name="Teasdale R.D."/>
            <person name="Liu E.T."/>
            <person name="Brusic V."/>
            <person name="Quackenbush J."/>
            <person name="Wahlestedt C."/>
            <person name="Mattick J.S."/>
            <person name="Hume D.A."/>
            <person name="Kai C."/>
            <person name="Sasaki D."/>
            <person name="Tomaru Y."/>
            <person name="Fukuda S."/>
            <person name="Kanamori-Katayama M."/>
            <person name="Suzuki M."/>
            <person name="Aoki J."/>
            <person name="Arakawa T."/>
            <person name="Iida J."/>
            <person name="Imamura K."/>
            <person name="Itoh M."/>
            <person name="Kato T."/>
            <person name="Kawaji H."/>
            <person name="Kawagashira N."/>
            <person name="Kawashima T."/>
            <person name="Kojima M."/>
            <person name="Kondo S."/>
            <person name="Konno H."/>
            <person name="Nakano K."/>
            <person name="Ninomiya N."/>
            <person name="Nishio T."/>
            <person name="Okada M."/>
            <person name="Plessy C."/>
            <person name="Shibata K."/>
            <person name="Shiraki T."/>
            <person name="Suzuki S."/>
            <person name="Tagami M."/>
            <person name="Waki K."/>
            <person name="Watahiki A."/>
            <person name="Okamura-Oho Y."/>
            <person name="Suzuki H."/>
            <person name="Kawai J."/>
            <person name="Hayashizaki Y."/>
        </authorList>
    </citation>
    <scope>NUCLEOTIDE SEQUENCE [LARGE SCALE MRNA]</scope>
    <source>
        <strain>C57BL/6J</strain>
        <tissue>Bone marrow</tissue>
        <tissue>Cerebellum</tissue>
        <tissue>Kidney</tissue>
        <tissue>Spinal ganglion</tissue>
    </source>
</reference>
<reference key="5">
    <citation type="journal article" date="2004" name="Genome Res.">
        <title>The status, quality, and expansion of the NIH full-length cDNA project: the Mammalian Gene Collection (MGC).</title>
        <authorList>
            <consortium name="The MGC Project Team"/>
        </authorList>
    </citation>
    <scope>NUCLEOTIDE SEQUENCE [LARGE SCALE MRNA]</scope>
    <source>
        <strain>NMRI</strain>
        <tissue>Mammary gland</tissue>
    </source>
</reference>
<reference key="6">
    <citation type="journal article" date="1992" name="J. Biol. Chem.">
        <title>Characteristics of the F52 protein, a MARCKS homologue.</title>
        <authorList>
            <person name="Blackshear P.J."/>
            <person name="Verghese G.M."/>
            <person name="Johnson J.D."/>
            <person name="Haupt D.M."/>
            <person name="Stumpo D.J."/>
        </authorList>
    </citation>
    <scope>FUNCTION</scope>
    <scope>INTERACTION WITH CALMODULIN</scope>
    <scope>SUBCELLULAR LOCATION</scope>
    <scope>PHOSPHORYLATION</scope>
    <scope>MYRISTOYLATION AT GLY-2</scope>
</reference>
<reference key="7">
    <citation type="journal article" date="1998" name="Biochemistry">
        <title>Interaction of the effector domain of MARCKS and MARCKS-related protein with lipid membranes revealed by electric potential measurements.</title>
        <authorList>
            <person name="Bahr G."/>
            <person name="Diederich A."/>
            <person name="Vergeres G."/>
            <person name="Winterhalter M."/>
        </authorList>
    </citation>
    <scope>SUBCELLULAR LOCATION</scope>
</reference>
<reference key="8">
    <citation type="journal article" date="1998" name="Genomics">
        <title>Promoter sequence, expression, and fine chromosomal mapping of the human gene (MLP) encoding the MARCKS-like protein: identification of neighboring and linked polymorphic loci for MLP and MACS and use in the evaluation of human neural tube defects.</title>
        <authorList>
            <person name="Stumpo D.J."/>
            <person name="Eddy R.L. Jr."/>
            <person name="Haley L.L."/>
            <person name="Sait S."/>
            <person name="Shows T.B."/>
            <person name="Lai W.S."/>
            <person name="Young W.S. III"/>
            <person name="Speer M.C."/>
            <person name="Dehejia A."/>
            <person name="Polymeropoulos M."/>
            <person name="Blackshear P.J."/>
        </authorList>
    </citation>
    <scope>TISSUE SPECIFICITY</scope>
    <scope>DEVELOPMENTAL STAGE</scope>
</reference>
<reference key="9">
    <citation type="journal article" date="2004" name="Mol. Cell. Proteomics">
        <title>Phosphoproteomic analysis of the developing mouse brain.</title>
        <authorList>
            <person name="Ballif B.A."/>
            <person name="Villen J."/>
            <person name="Beausoleil S.A."/>
            <person name="Schwartz D."/>
            <person name="Gygi S.P."/>
        </authorList>
    </citation>
    <scope>PHOSPHORYLATION [LARGE SCALE ANALYSIS] AT SER-22; SER-48; SER-71; SER-135; THR-148; SER-162; SER-165; THR-170 AND THR-192</scope>
    <scope>IDENTIFICATION BY MASS SPECTROMETRY [LARGE SCALE ANALYSIS]</scope>
    <source>
        <tissue>Embryonic brain</tissue>
    </source>
</reference>
<reference key="10">
    <citation type="journal article" date="2009" name="Immunity">
        <title>The phagosomal proteome in interferon-gamma-activated macrophages.</title>
        <authorList>
            <person name="Trost M."/>
            <person name="English L."/>
            <person name="Lemieux S."/>
            <person name="Courcelles M."/>
            <person name="Desjardins M."/>
            <person name="Thibault P."/>
        </authorList>
    </citation>
    <scope>PHOSPHORYLATION [LARGE SCALE ANALYSIS] AT SER-22; THR-85 AND THR-148</scope>
    <scope>IDENTIFICATION BY MASS SPECTROMETRY [LARGE SCALE ANALYSIS]</scope>
</reference>
<reference key="11">
    <citation type="journal article" date="2010" name="Cell">
        <title>A tissue-specific atlas of mouse protein phosphorylation and expression.</title>
        <authorList>
            <person name="Huttlin E.L."/>
            <person name="Jedrychowski M.P."/>
            <person name="Elias J.E."/>
            <person name="Goswami T."/>
            <person name="Rad R."/>
            <person name="Beausoleil S.A."/>
            <person name="Villen J."/>
            <person name="Haas W."/>
            <person name="Sowa M.E."/>
            <person name="Gygi S.P."/>
        </authorList>
    </citation>
    <scope>PHOSPHORYLATION [LARGE SCALE ANALYSIS] AT THR-14; SER-22; THR-85; SER-119; SER-120; SER-132; SER-135; THR-148; THR-170 AND THR-183</scope>
    <scope>IDENTIFICATION BY MASS SPECTROMETRY [LARGE SCALE ANALYSIS]</scope>
    <source>
        <tissue>Brain</tissue>
        <tissue>Brown adipose tissue</tissue>
        <tissue>Heart</tissue>
        <tissue>Kidney</tissue>
        <tissue>Liver</tissue>
        <tissue>Lung</tissue>
        <tissue>Pancreas</tissue>
        <tissue>Spleen</tissue>
        <tissue>Testis</tissue>
    </source>
</reference>
<reference key="12">
    <citation type="journal article" date="2012" name="Mol. Cell. Biol.">
        <title>c-Jun N-terminal kinase phosphorylation of MARCKSL1 determines actin stability and migration in neurons and in cancer cells.</title>
        <authorList>
            <person name="Bjorkblom B."/>
            <person name="Padzik A."/>
            <person name="Mohammad H."/>
            <person name="Westerlund N."/>
            <person name="Komulainen E."/>
            <person name="Hollos P."/>
            <person name="Parviainen L."/>
            <person name="Papageorgiou A.C."/>
            <person name="Iljin K."/>
            <person name="Kallioniemi O."/>
            <person name="Kallajoki M."/>
            <person name="Courtney M.J."/>
            <person name="Magard M."/>
            <person name="James P."/>
            <person name="Coffey E.T."/>
        </authorList>
    </citation>
    <scope>FUNCTION</scope>
    <scope>INTERACTION WITH F-ACTIN</scope>
    <scope>SUBCELLULAR LOCATION</scope>
    <scope>PHOSPHORYLATION AT SER-120; THR-148 AND THR-183</scope>
    <scope>TISSUE SPECIFICITY</scope>
    <scope>MUTAGENESIS OF SER-120; THR-148 AND THR-183</scope>
</reference>
<organism>
    <name type="scientific">Mus musculus</name>
    <name type="common">Mouse</name>
    <dbReference type="NCBI Taxonomy" id="10090"/>
    <lineage>
        <taxon>Eukaryota</taxon>
        <taxon>Metazoa</taxon>
        <taxon>Chordata</taxon>
        <taxon>Craniata</taxon>
        <taxon>Vertebrata</taxon>
        <taxon>Euteleostomi</taxon>
        <taxon>Mammalia</taxon>
        <taxon>Eutheria</taxon>
        <taxon>Euarchontoglires</taxon>
        <taxon>Glires</taxon>
        <taxon>Rodentia</taxon>
        <taxon>Myomorpha</taxon>
        <taxon>Muroidea</taxon>
        <taxon>Muridae</taxon>
        <taxon>Murinae</taxon>
        <taxon>Mus</taxon>
        <taxon>Mus</taxon>
    </lineage>
</organism>
<sequence length="200" mass="20165">MGSQSSKAPRGDVTAEEAAGASPAKANGQENGHVRSNGDLTPKGEGESPPVNGTDEAAGATGDAIEPAPPSQEAEAKGEVAPKETPKKKKKFSFKKPFKLSGLSFKRNRKEGGGDSSASSPTEEEQEQGEMSACSDEGTAQEGKAAATPESQEPQAKGAEASAASKEGDTEEEAGPQAAEPSTPSGPESGPTPASAEQNE</sequence>
<name>MRP_MOUSE</name>
<feature type="initiator methionine" description="Removed" evidence="4">
    <location>
        <position position="1"/>
    </location>
</feature>
<feature type="chain" id="PRO_0000157153" description="MARCKS-related protein">
    <location>
        <begin position="2"/>
        <end position="200"/>
    </location>
</feature>
<feature type="region of interest" description="Disordered" evidence="2">
    <location>
        <begin position="1"/>
        <end position="200"/>
    </location>
</feature>
<feature type="region of interest" description="Effector domain involved in lipid-binding and calmodulin-binding" evidence="4 9">
    <location>
        <begin position="87"/>
        <end position="110"/>
    </location>
</feature>
<feature type="compositionally biased region" description="Low complexity" evidence="2">
    <location>
        <begin position="16"/>
        <end position="26"/>
    </location>
</feature>
<feature type="compositionally biased region" description="Low complexity" evidence="2">
    <location>
        <begin position="53"/>
        <end position="64"/>
    </location>
</feature>
<feature type="compositionally biased region" description="Basic and acidic residues" evidence="2">
    <location>
        <begin position="74"/>
        <end position="85"/>
    </location>
</feature>
<feature type="compositionally biased region" description="Basic residues" evidence="2">
    <location>
        <begin position="86"/>
        <end position="98"/>
    </location>
</feature>
<feature type="compositionally biased region" description="Low complexity" evidence="2">
    <location>
        <begin position="156"/>
        <end position="165"/>
    </location>
</feature>
<feature type="compositionally biased region" description="Low complexity" evidence="2">
    <location>
        <begin position="178"/>
        <end position="200"/>
    </location>
</feature>
<feature type="modified residue" description="Phosphothreonine" evidence="15">
    <location>
        <position position="14"/>
    </location>
</feature>
<feature type="modified residue" description="Phosphoserine" evidence="13 14 15">
    <location>
        <position position="22"/>
    </location>
</feature>
<feature type="modified residue" description="Phosphoserine" evidence="1">
    <location>
        <position position="36"/>
    </location>
</feature>
<feature type="modified residue" description="Phosphoserine" evidence="13">
    <location>
        <position position="48"/>
    </location>
</feature>
<feature type="modified residue" description="Phosphoserine" evidence="13">
    <location>
        <position position="71"/>
    </location>
</feature>
<feature type="modified residue" description="Phosphothreonine" evidence="14 15">
    <location>
        <position position="85"/>
    </location>
</feature>
<feature type="modified residue" description="Phosphoserine; by PKC" evidence="1">
    <location>
        <position position="93"/>
    </location>
</feature>
<feature type="modified residue" description="Phosphoserine; by PKC" evidence="1">
    <location>
        <position position="101"/>
    </location>
</feature>
<feature type="modified residue" description="Phosphoserine; by PKC" evidence="1">
    <location>
        <position position="104"/>
    </location>
</feature>
<feature type="modified residue" description="Phosphoserine" evidence="15">
    <location>
        <position position="119"/>
    </location>
</feature>
<feature type="modified residue" description="Phosphoserine; by MAPK8" evidence="6 15">
    <location>
        <position position="120"/>
    </location>
</feature>
<feature type="modified residue" description="Phosphoserine" evidence="15">
    <location>
        <position position="132"/>
    </location>
</feature>
<feature type="modified residue" description="Phosphoserine" evidence="13 15">
    <location>
        <position position="135"/>
    </location>
</feature>
<feature type="modified residue" description="Phosphothreonine; by MAPK8" evidence="6 13 14 15">
    <location>
        <position position="148"/>
    </location>
</feature>
<feature type="modified residue" description="Phosphoserine" evidence="1">
    <location>
        <position position="151"/>
    </location>
</feature>
<feature type="modified residue" description="Phosphoserine" evidence="13">
    <location>
        <position position="162"/>
    </location>
</feature>
<feature type="modified residue" description="Phosphoserine" evidence="13">
    <location>
        <position position="165"/>
    </location>
</feature>
<feature type="modified residue" description="Phosphothreonine" evidence="13 15">
    <location>
        <position position="170"/>
    </location>
</feature>
<feature type="modified residue" description="Phosphothreonine; by MAPK8" evidence="6 15">
    <location>
        <position position="183"/>
    </location>
</feature>
<feature type="modified residue" description="Phosphothreonine" evidence="13">
    <location>
        <position position="192"/>
    </location>
</feature>
<feature type="lipid moiety-binding region" description="N-myristoyl glycine" evidence="4">
    <location>
        <position position="2"/>
    </location>
</feature>
<feature type="mutagenesis site" description="Complete loss of MAPK-mediated phosphorylation; when associated with A-148 and A-183. In neurons, induces the generation of large, flat lamellipodial protrusions; when associated with A-148 and A-183." evidence="6">
    <original>S</original>
    <variation>A</variation>
    <location>
        <position position="120"/>
    </location>
</feature>
<feature type="mutagenesis site" description="Induction of F-actin-bundling; when associated with D-148 and D-183. In neurons, induces the generation of long and prominent filopodia; when associated with D-148 and D-183." evidence="6">
    <original>S</original>
    <variation>D</variation>
    <location>
        <position position="120"/>
    </location>
</feature>
<feature type="mutagenesis site" description="Complete loss of MAPK-mediated phosphorylation; when associated with A-120 and A-183. In neurons, induces the generation of large, flat lamellipodial protrusions; when associated with A-120 and A-183." evidence="6">
    <original>T</original>
    <variation>A</variation>
    <location>
        <position position="148"/>
    </location>
</feature>
<feature type="mutagenesis site" description="Induction of F-actin-bundling; when associated with D-120 and D-183. In neurons, induces the generation of long and prominent filopodia; when associated with D-120 and D-183." evidence="6">
    <original>T</original>
    <variation>D</variation>
    <location>
        <position position="148"/>
    </location>
</feature>
<feature type="mutagenesis site" description="Complete loss of MAPK-mediated phosphorylation; when associated with A-120 and A-148. In neurons, induces the generation of large, flat lamellipodial protrusions; when associated with A-120 and A-148." evidence="6">
    <original>T</original>
    <variation>A</variation>
    <location>
        <position position="183"/>
    </location>
</feature>
<feature type="mutagenesis site" description="Induction of F-actin-bundling; when associated with D-120 and D-148. In neurons, induces the generation of long and prominent filopodia; when associated with D-120 and D-148." evidence="6">
    <original>T</original>
    <variation>D</variation>
    <location>
        <position position="183"/>
    </location>
</feature>
<feature type="sequence conflict" description="In Ref. 5; AAH06757." evidence="10" ref="5">
    <original>C</original>
    <variation>S</variation>
    <location>
        <position position="134"/>
    </location>
</feature>
<comment type="function">
    <text evidence="6 11">Involved in the control of cell movement by regulating actin cytoskeleton homeostasis and filopodium and lamellipodium formation (PubMed:22751924). When unphosphorylated, induces cell migration (PubMed:22751924). When phosphorylated by MAPK8, induces actin bundles formation and stabilization, thereby reducing actin plasticity, hence restricting cell movement, including neuronal migration (PubMed:22751924). May be involved in coupling the protein kinase C and calmodulin signal transduction systems (Probable).</text>
</comment>
<comment type="subunit">
    <text evidence="4 6">Binds to filamentous actin (F-actin), but not to monomeric G-actin, independently of its phosphorylation status (PubMed:22751924). Interacts with calmodulin (PubMed:1618855).</text>
</comment>
<comment type="subcellular location">
    <subcellularLocation>
        <location evidence="6">Cytoplasm</location>
        <location evidence="6">Cytoskeleton</location>
    </subcellularLocation>
    <subcellularLocation>
        <location evidence="11 12">Cell membrane</location>
        <topology evidence="11">Lipid-anchor</topology>
    </subcellularLocation>
    <text evidence="1 6 11 12">Associates with the membrane via the insertion of the N-terminal N-myristoyl chain and the partial insertion of the effector domain (Probable). Association of the effector domain with membranes may be regulated by Ca(2+)/calmodulin (By similarity). Colocalizes with F-actin at the leading edge of migrating cells (PubMed:22751924).</text>
</comment>
<comment type="tissue specificity">
    <text evidence="5 6 7 8">Expressed at high levels in brain cortex and hippocampus, including dentate gyrus, anterior olfactory nucleus, primary olfactory cortex, entorhinal cortex, medial preoptic area and dorsomedial hypothalamic nucleus (at protein level) (PubMed:1864362, PubMed:22751924, PubMed:8406449, PubMed:9598313). Expressed in neuronal cells (at protein level) (PubMed:22751924). Detected in the retina (PubMed:9598313). Strongly expressed in testis and uterus; expressed at lower levels in cerebellum, cerebrum, adipose tissue, spleen, kidney, thyroid, liver, lung, skeletal muscle and heart (PubMed:8406449). Detected in T-cells and B-cells (PubMed:8406449).</text>
</comment>
<comment type="developmental stage">
    <text evidence="8">Expressed in the developing neural tube as early as 8.5 dpc. Remains most highly expressed in the developing brain and spinal cord during later development at least until 14.5 dpc. Also detected in the lung, adrenal gland, gut and kidney, particularly the kidney cortex. Undetectable in the liver.</text>
</comment>
<comment type="induction">
    <text evidence="3">Up-regulated in peritoneal macrophages in response to bacterial lipopolysaccharide (LPS).</text>
</comment>
<comment type="PTM">
    <text evidence="4 6">Phosphorylated (PubMed:1618855, PubMed:22751924). Phosphorylation at Ser-120 and Thr-183 is non-redundantly catalyzed by MAPK8 in vivo (PubMed:22751924). Phosphorylation at Thr-148 is preferentially catalyzed by MAPK8 in vivo, but this modification can also be catalyzed by other kinases in the absence of MAPK8 (PubMed:22751924). May be phosphorylated by protein kinase C, which disrupts the interaction with calmodulin (PubMed:1618855).</text>
</comment>
<comment type="similarity">
    <text evidence="10">Belongs to the MARCKS family.</text>
</comment>
<evidence type="ECO:0000250" key="1">
    <source>
        <dbReference type="UniProtKB" id="P49006"/>
    </source>
</evidence>
<evidence type="ECO:0000256" key="2">
    <source>
        <dbReference type="SAM" id="MobiDB-lite"/>
    </source>
</evidence>
<evidence type="ECO:0000269" key="3">
    <source>
    </source>
</evidence>
<evidence type="ECO:0000269" key="4">
    <source>
    </source>
</evidence>
<evidence type="ECO:0000269" key="5">
    <source>
    </source>
</evidence>
<evidence type="ECO:0000269" key="6">
    <source>
    </source>
</evidence>
<evidence type="ECO:0000269" key="7">
    <source>
    </source>
</evidence>
<evidence type="ECO:0000269" key="8">
    <source>
    </source>
</evidence>
<evidence type="ECO:0000269" key="9">
    <source>
    </source>
</evidence>
<evidence type="ECO:0000305" key="10"/>
<evidence type="ECO:0000305" key="11">
    <source>
    </source>
</evidence>
<evidence type="ECO:0000305" key="12">
    <source>
    </source>
</evidence>
<evidence type="ECO:0007744" key="13">
    <source>
    </source>
</evidence>
<evidence type="ECO:0007744" key="14">
    <source>
    </source>
</evidence>
<evidence type="ECO:0007744" key="15">
    <source>
    </source>
</evidence>
<dbReference type="EMBL" id="X61399">
    <property type="protein sequence ID" value="CAA43671.1"/>
    <property type="molecule type" value="mRNA"/>
</dbReference>
<dbReference type="EMBL" id="S65597">
    <property type="protein sequence ID" value="AAP13962.1"/>
    <property type="molecule type" value="Genomic_DNA"/>
</dbReference>
<dbReference type="EMBL" id="AK079390">
    <property type="protein sequence ID" value="BAC37630.1"/>
    <property type="molecule type" value="mRNA"/>
</dbReference>
<dbReference type="EMBL" id="AK083913">
    <property type="protein sequence ID" value="BAC39058.1"/>
    <property type="molecule type" value="mRNA"/>
</dbReference>
<dbReference type="EMBL" id="AK152990">
    <property type="protein sequence ID" value="BAE31636.1"/>
    <property type="molecule type" value="mRNA"/>
</dbReference>
<dbReference type="EMBL" id="AK169355">
    <property type="protein sequence ID" value="BAE41104.1"/>
    <property type="molecule type" value="mRNA"/>
</dbReference>
<dbReference type="EMBL" id="BC006757">
    <property type="protein sequence ID" value="AAH06757.1"/>
    <property type="molecule type" value="mRNA"/>
</dbReference>
<dbReference type="CCDS" id="CCDS18695.1"/>
<dbReference type="PIR" id="S17185">
    <property type="entry name" value="S17185"/>
</dbReference>
<dbReference type="RefSeq" id="NP_034937.1">
    <property type="nucleotide sequence ID" value="NM_010807.4"/>
</dbReference>
<dbReference type="BioGRID" id="201439">
    <property type="interactions" value="9"/>
</dbReference>
<dbReference type="FunCoup" id="P28667">
    <property type="interactions" value="477"/>
</dbReference>
<dbReference type="STRING" id="10090.ENSMUSP00000055637"/>
<dbReference type="GlyGen" id="P28667">
    <property type="glycosylation" value="2 sites"/>
</dbReference>
<dbReference type="iPTMnet" id="P28667"/>
<dbReference type="PhosphoSitePlus" id="P28667"/>
<dbReference type="SwissPalm" id="P28667"/>
<dbReference type="jPOST" id="P28667"/>
<dbReference type="PaxDb" id="10090-ENSMUSP00000055637"/>
<dbReference type="PeptideAtlas" id="P28667"/>
<dbReference type="ProteomicsDB" id="291416"/>
<dbReference type="Pumba" id="P28667"/>
<dbReference type="Antibodypedia" id="31303">
    <property type="antibodies" value="240 antibodies from 34 providers"/>
</dbReference>
<dbReference type="DNASU" id="17357"/>
<dbReference type="Ensembl" id="ENSMUST00000062356.7">
    <property type="protein sequence ID" value="ENSMUSP00000055637.7"/>
    <property type="gene ID" value="ENSMUSG00000047945.7"/>
</dbReference>
<dbReference type="GeneID" id="17357"/>
<dbReference type="KEGG" id="mmu:17357"/>
<dbReference type="UCSC" id="uc008uxf.2">
    <property type="organism name" value="mouse"/>
</dbReference>
<dbReference type="AGR" id="MGI:97143"/>
<dbReference type="CTD" id="65108"/>
<dbReference type="MGI" id="MGI:97143">
    <property type="gene designation" value="Marcksl1"/>
</dbReference>
<dbReference type="VEuPathDB" id="HostDB:ENSMUSG00000047945"/>
<dbReference type="eggNOG" id="ENOG502RYXK">
    <property type="taxonomic scope" value="Eukaryota"/>
</dbReference>
<dbReference type="GeneTree" id="ENSGT00730000111349"/>
<dbReference type="HOGENOM" id="CLU_073091_1_0_1"/>
<dbReference type="InParanoid" id="P28667"/>
<dbReference type="OMA" id="PPIMGSQ"/>
<dbReference type="OrthoDB" id="9948538at2759"/>
<dbReference type="PhylomeDB" id="P28667"/>
<dbReference type="TreeFam" id="TF332815"/>
<dbReference type="BioGRID-ORCS" id="17357">
    <property type="hits" value="4 hits in 78 CRISPR screens"/>
</dbReference>
<dbReference type="ChiTaRS" id="Marcksl1">
    <property type="organism name" value="mouse"/>
</dbReference>
<dbReference type="PRO" id="PR:P28667"/>
<dbReference type="Proteomes" id="UP000000589">
    <property type="component" value="Chromosome 4"/>
</dbReference>
<dbReference type="RNAct" id="P28667">
    <property type="molecule type" value="protein"/>
</dbReference>
<dbReference type="Bgee" id="ENSMUSG00000047945">
    <property type="expression patterns" value="Expressed in neural tube and 274 other cell types or tissues"/>
</dbReference>
<dbReference type="GO" id="GO:0005737">
    <property type="term" value="C:cytoplasm"/>
    <property type="evidence" value="ECO:0007669"/>
    <property type="project" value="UniProtKB-KW"/>
</dbReference>
<dbReference type="GO" id="GO:0005856">
    <property type="term" value="C:cytoskeleton"/>
    <property type="evidence" value="ECO:0007669"/>
    <property type="project" value="UniProtKB-SubCell"/>
</dbReference>
<dbReference type="GO" id="GO:0005886">
    <property type="term" value="C:plasma membrane"/>
    <property type="evidence" value="ECO:0007669"/>
    <property type="project" value="UniProtKB-SubCell"/>
</dbReference>
<dbReference type="GO" id="GO:0003779">
    <property type="term" value="F:actin binding"/>
    <property type="evidence" value="ECO:0007669"/>
    <property type="project" value="UniProtKB-KW"/>
</dbReference>
<dbReference type="GO" id="GO:0005516">
    <property type="term" value="F:calmodulin binding"/>
    <property type="evidence" value="ECO:0007669"/>
    <property type="project" value="UniProtKB-KW"/>
</dbReference>
<dbReference type="GO" id="GO:0008283">
    <property type="term" value="P:cell population proliferation"/>
    <property type="evidence" value="ECO:0000314"/>
    <property type="project" value="MGI"/>
</dbReference>
<dbReference type="GO" id="GO:0008284">
    <property type="term" value="P:positive regulation of cell population proliferation"/>
    <property type="evidence" value="ECO:0000314"/>
    <property type="project" value="MGI"/>
</dbReference>
<dbReference type="InterPro" id="IPR002101">
    <property type="entry name" value="MARCKS"/>
</dbReference>
<dbReference type="PANTHER" id="PTHR14353:SF8">
    <property type="entry name" value="MARCKS-RELATED PROTEIN"/>
    <property type="match status" value="1"/>
</dbReference>
<dbReference type="PANTHER" id="PTHR14353">
    <property type="entry name" value="MYRISTOYLATED ALANINE-RICH C-KINASE SUBSTRATE MARCKS"/>
    <property type="match status" value="1"/>
</dbReference>
<dbReference type="Pfam" id="PF02063">
    <property type="entry name" value="MARCKS"/>
    <property type="match status" value="2"/>
</dbReference>
<dbReference type="PRINTS" id="PR00963">
    <property type="entry name" value="MARCKS"/>
</dbReference>
<dbReference type="PROSITE" id="PS00826">
    <property type="entry name" value="MARCKS_1"/>
    <property type="match status" value="1"/>
</dbReference>
<dbReference type="PROSITE" id="PS00827">
    <property type="entry name" value="MARCKS_2"/>
    <property type="match status" value="1"/>
</dbReference>
<protein>
    <recommendedName>
        <fullName>MARCKS-related protein</fullName>
    </recommendedName>
    <alternativeName>
        <fullName>Brain protein F52</fullName>
    </alternativeName>
    <alternativeName>
        <fullName>MARCKS-like protein 1</fullName>
    </alternativeName>
    <alternativeName>
        <fullName>Macrophage myristoylated alanine-rich C kinase substrate</fullName>
        <shortName>Mac-MARCKS</shortName>
        <shortName>MacMARCKS</shortName>
    </alternativeName>
</protein>
<accession>P28667</accession>
<accession>Q3TEZ4</accession>
<accession>Q91W07</accession>